<organism>
    <name type="scientific">Escherichia coli O157:H7 (strain EC4115 / EHEC)</name>
    <dbReference type="NCBI Taxonomy" id="444450"/>
    <lineage>
        <taxon>Bacteria</taxon>
        <taxon>Pseudomonadati</taxon>
        <taxon>Pseudomonadota</taxon>
        <taxon>Gammaproteobacteria</taxon>
        <taxon>Enterobacterales</taxon>
        <taxon>Enterobacteriaceae</taxon>
        <taxon>Escherichia</taxon>
    </lineage>
</organism>
<sequence>MKTDTPSLETPQAARLRRRQLIRQLLERDKTPLAILFMAAVVGTLVGLAAVAFDKGVAWLQNQRMGALVHTADNYPLLLTVAFLCSAVLAMFGYFLVRKYAPEAGGSGIPEIEGALEDQRPVRWWRVLPVKFFGGLGTLGGGMVLGREGPTVQIGGNIGRMVLDVFRLKGDEARHTLLATGAAAGLAAAFNAPLAGILFIIEEMRPQFRYTLISIKAVFIGVIMSTIMYRIFNHEVALIDVGKLSDAPLNTLWLYLILGIIFGIFGPIFNKWVLGMQDLLHRVHGGNITKWVLMGGAIGGLCGLLGFVAPATSGGGFNLIPIATAGNFSMGMLVFIFVARVITTLLCFSSGAPGGIFAPMLALGTVLGTAFGMVAVELFPQYHLEAGTFAIAGMGALLAASIRAPLTGIILVLEMTDNYQLILPMIITGLGATLLAQFTGGKPLYSAILARTLAKQEAEQLARSKAASASENT</sequence>
<protein>
    <recommendedName>
        <fullName evidence="1">H(+)/Cl(-) exchange transporter ClcA</fullName>
    </recommendedName>
</protein>
<comment type="function">
    <text evidence="1">Proton-coupled chloride transporter. Functions as antiport system and exchanges two chloride ions for 1 proton. Probably acts as an electrical shunt for an outwardly-directed proton pump that is linked to amino acid decarboxylation, as part of the extreme acid resistance (XAR) response.</text>
</comment>
<comment type="catalytic activity">
    <reaction evidence="1">
        <text>2 chloride(in) + H(+)(out) = 2 chloride(out) + H(+)(in)</text>
        <dbReference type="Rhea" id="RHEA:29567"/>
        <dbReference type="ChEBI" id="CHEBI:15378"/>
        <dbReference type="ChEBI" id="CHEBI:17996"/>
    </reaction>
</comment>
<comment type="subunit">
    <text evidence="1">Homodimer.</text>
</comment>
<comment type="subcellular location">
    <subcellularLocation>
        <location evidence="1">Cell inner membrane</location>
        <topology evidence="1">Multi-pass membrane protein</topology>
    </subcellularLocation>
</comment>
<comment type="similarity">
    <text evidence="1">Belongs to the chloride channel (TC 2.A.49) family. ClcA subfamily.</text>
</comment>
<gene>
    <name evidence="1" type="primary">clcA</name>
    <name evidence="1" type="synonym">eriC</name>
    <name type="ordered locus">ECH74115_0165</name>
</gene>
<keyword id="KW-0050">Antiport</keyword>
<keyword id="KW-0997">Cell inner membrane</keyword>
<keyword id="KW-1003">Cell membrane</keyword>
<keyword id="KW-0868">Chloride</keyword>
<keyword id="KW-0406">Ion transport</keyword>
<keyword id="KW-0472">Membrane</keyword>
<keyword id="KW-0812">Transmembrane</keyword>
<keyword id="KW-1133">Transmembrane helix</keyword>
<keyword id="KW-0813">Transport</keyword>
<evidence type="ECO:0000255" key="1">
    <source>
        <dbReference type="HAMAP-Rule" id="MF_01128"/>
    </source>
</evidence>
<reference key="1">
    <citation type="journal article" date="2011" name="Proc. Natl. Acad. Sci. U.S.A.">
        <title>Genomic anatomy of Escherichia coli O157:H7 outbreaks.</title>
        <authorList>
            <person name="Eppinger M."/>
            <person name="Mammel M.K."/>
            <person name="Leclerc J.E."/>
            <person name="Ravel J."/>
            <person name="Cebula T.A."/>
        </authorList>
    </citation>
    <scope>NUCLEOTIDE SEQUENCE [LARGE SCALE GENOMIC DNA]</scope>
    <source>
        <strain>EC4115 / EHEC</strain>
    </source>
</reference>
<proteinExistence type="inferred from homology"/>
<feature type="chain" id="PRO_1000137294" description="H(+)/Cl(-) exchange transporter ClcA">
    <location>
        <begin position="1"/>
        <end position="473"/>
    </location>
</feature>
<feature type="topological domain" description="Cytoplasmic" evidence="1">
    <location>
        <begin position="1"/>
        <end position="32"/>
    </location>
</feature>
<feature type="transmembrane region" description="Helical" evidence="1">
    <location>
        <begin position="33"/>
        <end position="69"/>
    </location>
</feature>
<feature type="topological domain" description="Periplasmic" evidence="1">
    <location>
        <begin position="70"/>
        <end position="76"/>
    </location>
</feature>
<feature type="transmembrane region" description="Helical" evidence="1">
    <location>
        <begin position="77"/>
        <end position="100"/>
    </location>
</feature>
<feature type="intramembrane region" description="Helical" evidence="1">
    <location>
        <begin position="109"/>
        <end position="116"/>
    </location>
</feature>
<feature type="topological domain" description="Cytoplasmic" evidence="1">
    <location>
        <begin position="117"/>
        <end position="123"/>
    </location>
</feature>
<feature type="transmembrane region" description="Helical" evidence="1">
    <location>
        <begin position="124"/>
        <end position="141"/>
    </location>
</feature>
<feature type="transmembrane region" description="Helical" evidence="1">
    <location>
        <begin position="148"/>
        <end position="166"/>
    </location>
</feature>
<feature type="topological domain" description="Cytoplasmic" evidence="1">
    <location>
        <begin position="167"/>
        <end position="176"/>
    </location>
</feature>
<feature type="intramembrane region" description="Helical" evidence="1">
    <location>
        <begin position="177"/>
        <end position="189"/>
    </location>
</feature>
<feature type="intramembrane region" description="Helical" evidence="1">
    <location>
        <begin position="193"/>
        <end position="201"/>
    </location>
</feature>
<feature type="topological domain" description="Cytoplasmic" evidence="1">
    <location>
        <begin position="202"/>
        <end position="214"/>
    </location>
</feature>
<feature type="transmembrane region" description="Helical" evidence="1">
    <location>
        <begin position="215"/>
        <end position="232"/>
    </location>
</feature>
<feature type="topological domain" description="Periplasmic" evidence="1">
    <location>
        <begin position="233"/>
        <end position="252"/>
    </location>
</feature>
<feature type="transmembrane region" description="Helical" evidence="1">
    <location>
        <begin position="253"/>
        <end position="281"/>
    </location>
</feature>
<feature type="topological domain" description="Cytoplasmic" evidence="1">
    <location>
        <begin position="282"/>
        <end position="287"/>
    </location>
</feature>
<feature type="transmembrane region" description="Helical" evidence="1">
    <location>
        <begin position="288"/>
        <end position="309"/>
    </location>
</feature>
<feature type="topological domain" description="Periplasmic" evidence="1">
    <location>
        <begin position="310"/>
        <end position="329"/>
    </location>
</feature>
<feature type="transmembrane region" description="Helical" evidence="1">
    <location>
        <begin position="330"/>
        <end position="349"/>
    </location>
</feature>
<feature type="transmembrane region" description="Helical" evidence="1">
    <location>
        <begin position="355"/>
        <end position="376"/>
    </location>
</feature>
<feature type="topological domain" description="Periplasmic" evidence="1">
    <location>
        <begin position="377"/>
        <end position="386"/>
    </location>
</feature>
<feature type="intramembrane region" description="Helical" evidence="1">
    <location>
        <begin position="387"/>
        <end position="401"/>
    </location>
</feature>
<feature type="intramembrane region" description="Note=Loop between two helices" evidence="1">
    <location>
        <begin position="402"/>
        <end position="404"/>
    </location>
</feature>
<feature type="intramembrane region" description="Helical" evidence="1">
    <location>
        <begin position="405"/>
        <end position="416"/>
    </location>
</feature>
<feature type="intramembrane region" description="Note=Loop between two helices" evidence="1">
    <location>
        <begin position="417"/>
        <end position="421"/>
    </location>
</feature>
<feature type="transmembrane region" description="Helical" evidence="1">
    <location>
        <begin position="422"/>
        <end position="438"/>
    </location>
</feature>
<feature type="topological domain" description="Cytoplasmic" evidence="1">
    <location>
        <begin position="439"/>
        <end position="473"/>
    </location>
</feature>
<feature type="short sequence motif" description="Selectivity filter part_1" evidence="1">
    <location>
        <begin position="106"/>
        <end position="110"/>
    </location>
</feature>
<feature type="short sequence motif" description="Selectivity filter part_2" evidence="1">
    <location>
        <begin position="146"/>
        <end position="150"/>
    </location>
</feature>
<feature type="short sequence motif" description="Selectivity filter part_3" evidence="1">
    <location>
        <begin position="355"/>
        <end position="359"/>
    </location>
</feature>
<feature type="binding site" evidence="1">
    <location>
        <position position="107"/>
    </location>
    <ligand>
        <name>chloride</name>
        <dbReference type="ChEBI" id="CHEBI:17996"/>
    </ligand>
</feature>
<feature type="binding site" evidence="1">
    <location>
        <position position="356"/>
    </location>
    <ligand>
        <name>chloride</name>
        <dbReference type="ChEBI" id="CHEBI:17996"/>
    </ligand>
</feature>
<feature type="binding site" evidence="1">
    <location>
        <position position="357"/>
    </location>
    <ligand>
        <name>chloride</name>
        <dbReference type="ChEBI" id="CHEBI:17996"/>
    </ligand>
</feature>
<feature type="binding site" evidence="1">
    <location>
        <position position="445"/>
    </location>
    <ligand>
        <name>chloride</name>
        <dbReference type="ChEBI" id="CHEBI:17996"/>
    </ligand>
</feature>
<feature type="site" description="Mediates proton transfer from the outer aqueous phase to the interior of the protein; involved in linking H(+) and Cl(-) transport" evidence="1">
    <location>
        <position position="148"/>
    </location>
</feature>
<feature type="site" description="Mediates proton transfer from the protein to the inner aqueous phase" evidence="1">
    <location>
        <position position="203"/>
    </location>
</feature>
<name>CLCA_ECO5E</name>
<accession>B5Z0D5</accession>
<dbReference type="EMBL" id="CP001164">
    <property type="protein sequence ID" value="ACI38599.1"/>
    <property type="molecule type" value="Genomic_DNA"/>
</dbReference>
<dbReference type="RefSeq" id="WP_000845408.1">
    <property type="nucleotide sequence ID" value="NC_011353.1"/>
</dbReference>
<dbReference type="SMR" id="B5Z0D5"/>
<dbReference type="KEGG" id="ecf:ECH74115_0165"/>
<dbReference type="HOGENOM" id="CLU_015263_7_0_6"/>
<dbReference type="GO" id="GO:0005886">
    <property type="term" value="C:plasma membrane"/>
    <property type="evidence" value="ECO:0007669"/>
    <property type="project" value="UniProtKB-SubCell"/>
</dbReference>
<dbReference type="GO" id="GO:0015297">
    <property type="term" value="F:antiporter activity"/>
    <property type="evidence" value="ECO:0007669"/>
    <property type="project" value="UniProtKB-UniRule"/>
</dbReference>
<dbReference type="GO" id="GO:0005247">
    <property type="term" value="F:voltage-gated chloride channel activity"/>
    <property type="evidence" value="ECO:0007669"/>
    <property type="project" value="TreeGrafter"/>
</dbReference>
<dbReference type="CDD" id="cd01031">
    <property type="entry name" value="EriC"/>
    <property type="match status" value="1"/>
</dbReference>
<dbReference type="FunFam" id="1.10.3080.10:FF:000005">
    <property type="entry name" value="H(+)/Cl(-) exchange transporter ClcA"/>
    <property type="match status" value="1"/>
</dbReference>
<dbReference type="Gene3D" id="1.10.3080.10">
    <property type="entry name" value="Clc chloride channel"/>
    <property type="match status" value="1"/>
</dbReference>
<dbReference type="HAMAP" id="MF_01128">
    <property type="entry name" value="CLC_ClcA"/>
    <property type="match status" value="1"/>
</dbReference>
<dbReference type="InterPro" id="IPR023861">
    <property type="entry name" value="Cl-channel_ClcA"/>
</dbReference>
<dbReference type="InterPro" id="IPR014743">
    <property type="entry name" value="Cl-channel_core"/>
</dbReference>
<dbReference type="InterPro" id="IPR001807">
    <property type="entry name" value="ClC"/>
</dbReference>
<dbReference type="NCBIfam" id="NF003640">
    <property type="entry name" value="PRK05277.1"/>
    <property type="match status" value="1"/>
</dbReference>
<dbReference type="PANTHER" id="PTHR45711">
    <property type="entry name" value="CHLORIDE CHANNEL PROTEIN"/>
    <property type="match status" value="1"/>
</dbReference>
<dbReference type="PANTHER" id="PTHR45711:SF6">
    <property type="entry name" value="CHLORIDE CHANNEL PROTEIN"/>
    <property type="match status" value="1"/>
</dbReference>
<dbReference type="Pfam" id="PF00654">
    <property type="entry name" value="Voltage_CLC"/>
    <property type="match status" value="1"/>
</dbReference>
<dbReference type="PRINTS" id="PR00762">
    <property type="entry name" value="CLCHANNEL"/>
</dbReference>
<dbReference type="SUPFAM" id="SSF81340">
    <property type="entry name" value="Clc chloride channel"/>
    <property type="match status" value="1"/>
</dbReference>